<gene>
    <name evidence="1" type="primary">uppP</name>
    <name type="synonym">bacA</name>
    <name type="synonym">upk</name>
    <name type="ordered locus">BL0721</name>
</gene>
<organism>
    <name type="scientific">Bifidobacterium longum (strain NCC 2705)</name>
    <dbReference type="NCBI Taxonomy" id="206672"/>
    <lineage>
        <taxon>Bacteria</taxon>
        <taxon>Bacillati</taxon>
        <taxon>Actinomycetota</taxon>
        <taxon>Actinomycetes</taxon>
        <taxon>Bifidobacteriales</taxon>
        <taxon>Bifidobacteriaceae</taxon>
        <taxon>Bifidobacterium</taxon>
    </lineage>
</organism>
<comment type="function">
    <text evidence="1">Catalyzes the dephosphorylation of undecaprenyl diphosphate (UPP). Confers resistance to bacitracin.</text>
</comment>
<comment type="catalytic activity">
    <reaction evidence="1">
        <text>di-trans,octa-cis-undecaprenyl diphosphate + H2O = di-trans,octa-cis-undecaprenyl phosphate + phosphate + H(+)</text>
        <dbReference type="Rhea" id="RHEA:28094"/>
        <dbReference type="ChEBI" id="CHEBI:15377"/>
        <dbReference type="ChEBI" id="CHEBI:15378"/>
        <dbReference type="ChEBI" id="CHEBI:43474"/>
        <dbReference type="ChEBI" id="CHEBI:58405"/>
        <dbReference type="ChEBI" id="CHEBI:60392"/>
        <dbReference type="EC" id="3.6.1.27"/>
    </reaction>
</comment>
<comment type="subcellular location">
    <subcellularLocation>
        <location evidence="1">Cell membrane</location>
        <topology evidence="1">Multi-pass membrane protein</topology>
    </subcellularLocation>
</comment>
<comment type="miscellaneous">
    <text>Bacitracin is thought to be involved in the inhibition of peptidoglycan synthesis by sequestering undecaprenyl diphosphate, thereby reducing the pool of lipid carrier available.</text>
</comment>
<comment type="similarity">
    <text evidence="1">Belongs to the UppP family.</text>
</comment>
<dbReference type="EC" id="3.6.1.27" evidence="1"/>
<dbReference type="EMBL" id="AE014295">
    <property type="protein sequence ID" value="AAN24539.1"/>
    <property type="molecule type" value="Genomic_DNA"/>
</dbReference>
<dbReference type="RefSeq" id="NP_695903.1">
    <property type="nucleotide sequence ID" value="NC_004307.2"/>
</dbReference>
<dbReference type="RefSeq" id="WP_007052850.1">
    <property type="nucleotide sequence ID" value="NC_004307.2"/>
</dbReference>
<dbReference type="SMR" id="Q8G6C4"/>
<dbReference type="STRING" id="206672.BL0721"/>
<dbReference type="EnsemblBacteria" id="AAN24539">
    <property type="protein sequence ID" value="AAN24539"/>
    <property type="gene ID" value="BL0721"/>
</dbReference>
<dbReference type="KEGG" id="blo:BL0721"/>
<dbReference type="PATRIC" id="fig|206672.9.peg.419"/>
<dbReference type="HOGENOM" id="CLU_060296_1_0_11"/>
<dbReference type="OrthoDB" id="9808289at2"/>
<dbReference type="PhylomeDB" id="Q8G6C4"/>
<dbReference type="Proteomes" id="UP000000439">
    <property type="component" value="Chromosome"/>
</dbReference>
<dbReference type="GO" id="GO:0005886">
    <property type="term" value="C:plasma membrane"/>
    <property type="evidence" value="ECO:0007669"/>
    <property type="project" value="UniProtKB-SubCell"/>
</dbReference>
<dbReference type="GO" id="GO:0050380">
    <property type="term" value="F:undecaprenyl-diphosphatase activity"/>
    <property type="evidence" value="ECO:0007669"/>
    <property type="project" value="UniProtKB-UniRule"/>
</dbReference>
<dbReference type="GO" id="GO:0071555">
    <property type="term" value="P:cell wall organization"/>
    <property type="evidence" value="ECO:0007669"/>
    <property type="project" value="UniProtKB-KW"/>
</dbReference>
<dbReference type="GO" id="GO:0009252">
    <property type="term" value="P:peptidoglycan biosynthetic process"/>
    <property type="evidence" value="ECO:0007669"/>
    <property type="project" value="UniProtKB-KW"/>
</dbReference>
<dbReference type="GO" id="GO:0008360">
    <property type="term" value="P:regulation of cell shape"/>
    <property type="evidence" value="ECO:0007669"/>
    <property type="project" value="UniProtKB-KW"/>
</dbReference>
<dbReference type="GO" id="GO:0046677">
    <property type="term" value="P:response to antibiotic"/>
    <property type="evidence" value="ECO:0007669"/>
    <property type="project" value="UniProtKB-UniRule"/>
</dbReference>
<dbReference type="HAMAP" id="MF_01006">
    <property type="entry name" value="Undec_diphosphatase"/>
    <property type="match status" value="1"/>
</dbReference>
<dbReference type="InterPro" id="IPR003824">
    <property type="entry name" value="UppP"/>
</dbReference>
<dbReference type="NCBIfam" id="TIGR00753">
    <property type="entry name" value="undec_PP_bacA"/>
    <property type="match status" value="1"/>
</dbReference>
<dbReference type="PANTHER" id="PTHR30622">
    <property type="entry name" value="UNDECAPRENYL-DIPHOSPHATASE"/>
    <property type="match status" value="1"/>
</dbReference>
<dbReference type="PANTHER" id="PTHR30622:SF4">
    <property type="entry name" value="UNDECAPRENYL-DIPHOSPHATASE"/>
    <property type="match status" value="1"/>
</dbReference>
<dbReference type="Pfam" id="PF02673">
    <property type="entry name" value="BacA"/>
    <property type="match status" value="1"/>
</dbReference>
<proteinExistence type="inferred from homology"/>
<sequence length="294" mass="31977">MNFFQAIILGIVQALTEYLPVSSSAHIRIFGDLMLGSDPGAAFTAIIQIGTELAVILYFRHDIINILTHWFSCLFGKNGKDWKARMGRGDNYATLGWNIIVGSIPIIILGFTLQNVIETSLRNLWITVTVLLVFGILLWMVDAKARQNKTMNDMTYRDAFLFGLGQSMALIPGVSRSGGTITVGRALGYTREAAVRLSFLMAIPAVFGSGLLEAIKAVKNYKTDAMFPGWGPTLVAMVISFVLGYIVIIGFLKFVSNFSYKAFAIYRIGLAVVVALLLIVGVLPAIDPSVVAAA</sequence>
<evidence type="ECO:0000255" key="1">
    <source>
        <dbReference type="HAMAP-Rule" id="MF_01006"/>
    </source>
</evidence>
<name>UPPP_BIFLO</name>
<protein>
    <recommendedName>
        <fullName evidence="1">Undecaprenyl-diphosphatase</fullName>
        <ecNumber evidence="1">3.6.1.27</ecNumber>
    </recommendedName>
    <alternativeName>
        <fullName evidence="1">Bacitracin resistance protein</fullName>
    </alternativeName>
    <alternativeName>
        <fullName evidence="1">Undecaprenyl pyrophosphate phosphatase</fullName>
    </alternativeName>
</protein>
<feature type="chain" id="PRO_0000151112" description="Undecaprenyl-diphosphatase">
    <location>
        <begin position="1"/>
        <end position="294"/>
    </location>
</feature>
<feature type="transmembrane region" description="Helical" evidence="1">
    <location>
        <begin position="39"/>
        <end position="59"/>
    </location>
</feature>
<feature type="transmembrane region" description="Helical" evidence="1">
    <location>
        <begin position="93"/>
        <end position="113"/>
    </location>
</feature>
<feature type="transmembrane region" description="Helical" evidence="1">
    <location>
        <begin position="123"/>
        <end position="143"/>
    </location>
</feature>
<feature type="transmembrane region" description="Helical" evidence="1">
    <location>
        <begin position="198"/>
        <end position="218"/>
    </location>
</feature>
<feature type="transmembrane region" description="Helical" evidence="1">
    <location>
        <begin position="232"/>
        <end position="252"/>
    </location>
</feature>
<feature type="transmembrane region" description="Helical" evidence="1">
    <location>
        <begin position="268"/>
        <end position="288"/>
    </location>
</feature>
<keyword id="KW-0046">Antibiotic resistance</keyword>
<keyword id="KW-1003">Cell membrane</keyword>
<keyword id="KW-0133">Cell shape</keyword>
<keyword id="KW-0961">Cell wall biogenesis/degradation</keyword>
<keyword id="KW-0378">Hydrolase</keyword>
<keyword id="KW-0472">Membrane</keyword>
<keyword id="KW-0573">Peptidoglycan synthesis</keyword>
<keyword id="KW-1185">Reference proteome</keyword>
<keyword id="KW-0812">Transmembrane</keyword>
<keyword id="KW-1133">Transmembrane helix</keyword>
<reference key="1">
    <citation type="journal article" date="2002" name="Proc. Natl. Acad. Sci. U.S.A.">
        <title>The genome sequence of Bifidobacterium longum reflects its adaptation to the human gastrointestinal tract.</title>
        <authorList>
            <person name="Schell M.A."/>
            <person name="Karmirantzou M."/>
            <person name="Snel B."/>
            <person name="Vilanova D."/>
            <person name="Berger B."/>
            <person name="Pessi G."/>
            <person name="Zwahlen M.-C."/>
            <person name="Desiere F."/>
            <person name="Bork P."/>
            <person name="Delley M."/>
            <person name="Pridmore R.D."/>
            <person name="Arigoni F."/>
        </authorList>
    </citation>
    <scope>NUCLEOTIDE SEQUENCE [LARGE SCALE GENOMIC DNA]</scope>
    <source>
        <strain>NCC 2705</strain>
    </source>
</reference>
<accession>Q8G6C4</accession>